<sequence length="137" mass="15609">MLQPKRTKFRKQHKGRIHGEAKGGFLLNFGGFGLKATEPERVTARQIEAARRAITRHMKRQGRVWIRVFPDVPVTSKPTEVRMGKGKGSVDYWAAKVKPGRIMFEIDGVSETIAREALRLGAMKLPVMTRIVVREDW</sequence>
<keyword id="KW-0687">Ribonucleoprotein</keyword>
<keyword id="KW-0689">Ribosomal protein</keyword>
<keyword id="KW-0694">RNA-binding</keyword>
<keyword id="KW-0699">rRNA-binding</keyword>
<keyword id="KW-0820">tRNA-binding</keyword>
<protein>
    <recommendedName>
        <fullName evidence="1">Large ribosomal subunit protein uL16</fullName>
    </recommendedName>
    <alternativeName>
        <fullName evidence="2">50S ribosomal protein L16</fullName>
    </alternativeName>
</protein>
<reference key="1">
    <citation type="journal article" date="2009" name="J. Bacteriol.">
        <title>Complete genome sequence of Rhodobacter sphaeroides KD131.</title>
        <authorList>
            <person name="Lim S.-K."/>
            <person name="Kim S.J."/>
            <person name="Cha S.H."/>
            <person name="Oh Y.-K."/>
            <person name="Rhee H.-J."/>
            <person name="Kim M.-S."/>
            <person name="Lee J.K."/>
        </authorList>
    </citation>
    <scope>NUCLEOTIDE SEQUENCE [LARGE SCALE GENOMIC DNA]</scope>
    <source>
        <strain>KD131 / KCTC 12085</strain>
    </source>
</reference>
<dbReference type="EMBL" id="CP001150">
    <property type="protein sequence ID" value="ACL99880.1"/>
    <property type="molecule type" value="Genomic_DNA"/>
</dbReference>
<dbReference type="RefSeq" id="WP_002722499.1">
    <property type="nucleotide sequence ID" value="NC_011963.1"/>
</dbReference>
<dbReference type="SMR" id="B9KL98"/>
<dbReference type="GeneID" id="67445507"/>
<dbReference type="KEGG" id="rsk:RSKD131_0021"/>
<dbReference type="HOGENOM" id="CLU_078858_2_1_5"/>
<dbReference type="GO" id="GO:0022625">
    <property type="term" value="C:cytosolic large ribosomal subunit"/>
    <property type="evidence" value="ECO:0007669"/>
    <property type="project" value="TreeGrafter"/>
</dbReference>
<dbReference type="GO" id="GO:0019843">
    <property type="term" value="F:rRNA binding"/>
    <property type="evidence" value="ECO:0007669"/>
    <property type="project" value="UniProtKB-UniRule"/>
</dbReference>
<dbReference type="GO" id="GO:0003735">
    <property type="term" value="F:structural constituent of ribosome"/>
    <property type="evidence" value="ECO:0007669"/>
    <property type="project" value="InterPro"/>
</dbReference>
<dbReference type="GO" id="GO:0000049">
    <property type="term" value="F:tRNA binding"/>
    <property type="evidence" value="ECO:0007669"/>
    <property type="project" value="UniProtKB-KW"/>
</dbReference>
<dbReference type="GO" id="GO:0006412">
    <property type="term" value="P:translation"/>
    <property type="evidence" value="ECO:0007669"/>
    <property type="project" value="UniProtKB-UniRule"/>
</dbReference>
<dbReference type="CDD" id="cd01433">
    <property type="entry name" value="Ribosomal_L16_L10e"/>
    <property type="match status" value="1"/>
</dbReference>
<dbReference type="FunFam" id="3.90.1170.10:FF:000001">
    <property type="entry name" value="50S ribosomal protein L16"/>
    <property type="match status" value="1"/>
</dbReference>
<dbReference type="Gene3D" id="3.90.1170.10">
    <property type="entry name" value="Ribosomal protein L10e/L16"/>
    <property type="match status" value="1"/>
</dbReference>
<dbReference type="HAMAP" id="MF_01342">
    <property type="entry name" value="Ribosomal_uL16"/>
    <property type="match status" value="1"/>
</dbReference>
<dbReference type="InterPro" id="IPR047873">
    <property type="entry name" value="Ribosomal_uL16"/>
</dbReference>
<dbReference type="InterPro" id="IPR000114">
    <property type="entry name" value="Ribosomal_uL16_bact-type"/>
</dbReference>
<dbReference type="InterPro" id="IPR020798">
    <property type="entry name" value="Ribosomal_uL16_CS"/>
</dbReference>
<dbReference type="InterPro" id="IPR016180">
    <property type="entry name" value="Ribosomal_uL16_dom"/>
</dbReference>
<dbReference type="InterPro" id="IPR036920">
    <property type="entry name" value="Ribosomal_uL16_sf"/>
</dbReference>
<dbReference type="NCBIfam" id="TIGR01164">
    <property type="entry name" value="rplP_bact"/>
    <property type="match status" value="1"/>
</dbReference>
<dbReference type="PANTHER" id="PTHR12220">
    <property type="entry name" value="50S/60S RIBOSOMAL PROTEIN L16"/>
    <property type="match status" value="1"/>
</dbReference>
<dbReference type="PANTHER" id="PTHR12220:SF13">
    <property type="entry name" value="LARGE RIBOSOMAL SUBUNIT PROTEIN UL16M"/>
    <property type="match status" value="1"/>
</dbReference>
<dbReference type="Pfam" id="PF00252">
    <property type="entry name" value="Ribosomal_L16"/>
    <property type="match status" value="1"/>
</dbReference>
<dbReference type="PRINTS" id="PR00060">
    <property type="entry name" value="RIBOSOMALL16"/>
</dbReference>
<dbReference type="SUPFAM" id="SSF54686">
    <property type="entry name" value="Ribosomal protein L16p/L10e"/>
    <property type="match status" value="1"/>
</dbReference>
<dbReference type="PROSITE" id="PS00586">
    <property type="entry name" value="RIBOSOMAL_L16_1"/>
    <property type="match status" value="1"/>
</dbReference>
<dbReference type="PROSITE" id="PS00701">
    <property type="entry name" value="RIBOSOMAL_L16_2"/>
    <property type="match status" value="1"/>
</dbReference>
<evidence type="ECO:0000255" key="1">
    <source>
        <dbReference type="HAMAP-Rule" id="MF_01342"/>
    </source>
</evidence>
<evidence type="ECO:0000305" key="2"/>
<proteinExistence type="inferred from homology"/>
<organism>
    <name type="scientific">Cereibacter sphaeroides (strain KD131 / KCTC 12085)</name>
    <name type="common">Rhodobacter sphaeroides</name>
    <dbReference type="NCBI Taxonomy" id="557760"/>
    <lineage>
        <taxon>Bacteria</taxon>
        <taxon>Pseudomonadati</taxon>
        <taxon>Pseudomonadota</taxon>
        <taxon>Alphaproteobacteria</taxon>
        <taxon>Rhodobacterales</taxon>
        <taxon>Paracoccaceae</taxon>
        <taxon>Cereibacter</taxon>
    </lineage>
</organism>
<feature type="chain" id="PRO_1000166375" description="Large ribosomal subunit protein uL16">
    <location>
        <begin position="1"/>
        <end position="137"/>
    </location>
</feature>
<comment type="function">
    <text evidence="1">Binds 23S rRNA and is also seen to make contacts with the A and possibly P site tRNAs.</text>
</comment>
<comment type="subunit">
    <text evidence="1">Part of the 50S ribosomal subunit.</text>
</comment>
<comment type="similarity">
    <text evidence="1">Belongs to the universal ribosomal protein uL16 family.</text>
</comment>
<accession>B9KL98</accession>
<name>RL16_CERSK</name>
<gene>
    <name evidence="1" type="primary">rplP</name>
    <name type="ordered locus">RSKD131_0021</name>
</gene>